<feature type="chain" id="PRO_0000215375" description="Transient receptor potential channel pyrexia">
    <location>
        <begin position="1"/>
        <end position="956"/>
    </location>
</feature>
<feature type="topological domain" description="Cytoplasmic" evidence="1">
    <location>
        <begin position="1"/>
        <end position="491"/>
    </location>
</feature>
<feature type="transmembrane region" description="Helical" evidence="1">
    <location>
        <begin position="492"/>
        <end position="512"/>
    </location>
</feature>
<feature type="topological domain" description="Extracellular" evidence="1">
    <location>
        <begin position="513"/>
        <end position="525"/>
    </location>
</feature>
<feature type="transmembrane region" description="Helical" evidence="1">
    <location>
        <begin position="526"/>
        <end position="546"/>
    </location>
</feature>
<feature type="topological domain" description="Cytoplasmic" evidence="1">
    <location>
        <begin position="547"/>
        <end position="565"/>
    </location>
</feature>
<feature type="transmembrane region" description="Helical" evidence="1">
    <location>
        <begin position="566"/>
        <end position="584"/>
    </location>
</feature>
<feature type="topological domain" description="Extracellular" evidence="1">
    <location>
        <begin position="585"/>
        <end position="601"/>
    </location>
</feature>
<feature type="transmembrane region" description="Helical" evidence="1">
    <location>
        <begin position="602"/>
        <end position="622"/>
    </location>
</feature>
<feature type="topological domain" description="Cytoplasmic" evidence="1">
    <location>
        <begin position="623"/>
        <end position="638"/>
    </location>
</feature>
<feature type="transmembrane region" description="Helical" evidence="1">
    <location>
        <begin position="639"/>
        <end position="659"/>
    </location>
</feature>
<feature type="topological domain" description="Extracellular" evidence="1">
    <location>
        <begin position="660"/>
        <end position="701"/>
    </location>
</feature>
<feature type="transmembrane region" description="Helical" evidence="1">
    <location>
        <begin position="702"/>
        <end position="722"/>
    </location>
</feature>
<feature type="topological domain" description="Cytoplasmic" evidence="1">
    <location>
        <begin position="723"/>
        <end position="956"/>
    </location>
</feature>
<feature type="repeat" description="ANK 1">
    <location>
        <begin position="132"/>
        <end position="161"/>
    </location>
</feature>
<feature type="repeat" description="ANK 2">
    <location>
        <begin position="166"/>
        <end position="195"/>
    </location>
</feature>
<feature type="repeat" description="ANK 3">
    <location>
        <begin position="198"/>
        <end position="227"/>
    </location>
</feature>
<feature type="repeat" description="ANK 4">
    <location>
        <begin position="231"/>
        <end position="260"/>
    </location>
</feature>
<feature type="repeat" description="ANK 5">
    <location>
        <begin position="265"/>
        <end position="294"/>
    </location>
</feature>
<feature type="repeat" description="ANK 6">
    <location>
        <begin position="298"/>
        <end position="327"/>
    </location>
</feature>
<feature type="repeat" description="ANK 7">
    <location>
        <begin position="331"/>
        <end position="362"/>
    </location>
</feature>
<feature type="repeat" description="ANK 8">
    <location>
        <begin position="366"/>
        <end position="395"/>
    </location>
</feature>
<feature type="glycosylation site" description="N-linked (GlcNAc...) asparagine" evidence="1">
    <location>
        <position position="666"/>
    </location>
</feature>
<feature type="splice variant" id="VSP_013426" description="In isoform B." evidence="3">
    <location>
        <begin position="1"/>
        <end position="418"/>
    </location>
</feature>
<accession>Q9W0T5</accession>
<accession>Q8I0I4</accession>
<name>PYX_DROME</name>
<evidence type="ECO:0000255" key="1"/>
<evidence type="ECO:0000269" key="2">
    <source>
    </source>
</evidence>
<evidence type="ECO:0000303" key="3">
    <source>
    </source>
</evidence>
<evidence type="ECO:0000305" key="4"/>
<keyword id="KW-0025">Alternative splicing</keyword>
<keyword id="KW-0040">ANK repeat</keyword>
<keyword id="KW-0325">Glycoprotein</keyword>
<keyword id="KW-0407">Ion channel</keyword>
<keyword id="KW-0406">Ion transport</keyword>
<keyword id="KW-0472">Membrane</keyword>
<keyword id="KW-1185">Reference proteome</keyword>
<keyword id="KW-0677">Repeat</keyword>
<keyword id="KW-0716">Sensory transduction</keyword>
<keyword id="KW-0812">Transmembrane</keyword>
<keyword id="KW-1133">Transmembrane helix</keyword>
<keyword id="KW-0813">Transport</keyword>
<sequence length="956" mass="107920">MENVRFSIIENDLKWNSESDPTADVDLLLDKRSISSEANSAGVFSDEAHEIFARQQQNQILWDLDEVKETLTESPGGKHVVDMVQSGCFLELMTDSADCNLALICCSVFGSVENTLFLLKHYNADPNVADSRGRTPLHFACCRANAPIAKVLLDFGADPNRWDARKEVTSLHCAASSKSVECILLLLRRKASINIGIEKRSALHYAIDVNAVDCVEILLKYGADPNTPQVYTETPLHTASAAGFAKCVQLLLSHNADVRSQFGEGKVTALHLAAENDYVECARLLLEHRAEVDCRNASHQTPLHLACLSQSIGTVDLLISYGANVNAVYRDGRTALHAAIVKQSRSLDCCNALLKAGADVNKADNYGYTPLHIAALNEFSSCVYTFIEHGADITARTDGRVSALSFIVRRTPEIIPKLMQKLDSSIKANDQEIGDVDCQIKLDFRLLVPSSSMDRGETELLLSLIEVGQKRILMHPLCETFLFLKWRRIRKFFLMSLAYHTLFVILFTFYVIWVYVRCCKKEELCVAPGYVSTIGYLVIILNLILLGKEVFQMAHGLRGYAKYWENWLQWTIGTGVLLCVTPETVRTDDLTAVPVWQHHVAAIVILLVWLELMMLVGRFPIFGVYVQMFTKVAVNFAKFLLAYICLLVAFGLSFAVLFNDYPAFENITWSFLKSITMMSGELEFEDIFYGDYAVKFPVTAHIIFLSFVLLVTVILTNLMVGLAVSDIQGLQVSATLDRLVRQAELVSRLESLFFSRLLRSAPTNLIQLCKRSALLRTSRDKLQFTIRPNDPRDNQLPEDIKLNVYKLVAERRDRNQSLRRRQFENNYNIFSRSLQRQQQPLHTDFLKPEPATGTTKKTPQNLFHMHELLRPRSATNVPQQFRQEAEGTVQMKNQANVLSAVLAEVQAIKTQLVDLVAKFERFSENATRKLNYSTDELCRLRQQGQSVASSHIRRHR</sequence>
<proteinExistence type="evidence at transcript level"/>
<reference key="1">
    <citation type="journal article" date="2000" name="Science">
        <title>The genome sequence of Drosophila melanogaster.</title>
        <authorList>
            <person name="Adams M.D."/>
            <person name="Celniker S.E."/>
            <person name="Holt R.A."/>
            <person name="Evans C.A."/>
            <person name="Gocayne J.D."/>
            <person name="Amanatides P.G."/>
            <person name="Scherer S.E."/>
            <person name="Li P.W."/>
            <person name="Hoskins R.A."/>
            <person name="Galle R.F."/>
            <person name="George R.A."/>
            <person name="Lewis S.E."/>
            <person name="Richards S."/>
            <person name="Ashburner M."/>
            <person name="Henderson S.N."/>
            <person name="Sutton G.G."/>
            <person name="Wortman J.R."/>
            <person name="Yandell M.D."/>
            <person name="Zhang Q."/>
            <person name="Chen L.X."/>
            <person name="Brandon R.C."/>
            <person name="Rogers Y.-H.C."/>
            <person name="Blazej R.G."/>
            <person name="Champe M."/>
            <person name="Pfeiffer B.D."/>
            <person name="Wan K.H."/>
            <person name="Doyle C."/>
            <person name="Baxter E.G."/>
            <person name="Helt G."/>
            <person name="Nelson C.R."/>
            <person name="Miklos G.L.G."/>
            <person name="Abril J.F."/>
            <person name="Agbayani A."/>
            <person name="An H.-J."/>
            <person name="Andrews-Pfannkoch C."/>
            <person name="Baldwin D."/>
            <person name="Ballew R.M."/>
            <person name="Basu A."/>
            <person name="Baxendale J."/>
            <person name="Bayraktaroglu L."/>
            <person name="Beasley E.M."/>
            <person name="Beeson K.Y."/>
            <person name="Benos P.V."/>
            <person name="Berman B.P."/>
            <person name="Bhandari D."/>
            <person name="Bolshakov S."/>
            <person name="Borkova D."/>
            <person name="Botchan M.R."/>
            <person name="Bouck J."/>
            <person name="Brokstein P."/>
            <person name="Brottier P."/>
            <person name="Burtis K.C."/>
            <person name="Busam D.A."/>
            <person name="Butler H."/>
            <person name="Cadieu E."/>
            <person name="Center A."/>
            <person name="Chandra I."/>
            <person name="Cherry J.M."/>
            <person name="Cawley S."/>
            <person name="Dahlke C."/>
            <person name="Davenport L.B."/>
            <person name="Davies P."/>
            <person name="de Pablos B."/>
            <person name="Delcher A."/>
            <person name="Deng Z."/>
            <person name="Mays A.D."/>
            <person name="Dew I."/>
            <person name="Dietz S.M."/>
            <person name="Dodson K."/>
            <person name="Doup L.E."/>
            <person name="Downes M."/>
            <person name="Dugan-Rocha S."/>
            <person name="Dunkov B.C."/>
            <person name="Dunn P."/>
            <person name="Durbin K.J."/>
            <person name="Evangelista C.C."/>
            <person name="Ferraz C."/>
            <person name="Ferriera S."/>
            <person name="Fleischmann W."/>
            <person name="Fosler C."/>
            <person name="Gabrielian A.E."/>
            <person name="Garg N.S."/>
            <person name="Gelbart W.M."/>
            <person name="Glasser K."/>
            <person name="Glodek A."/>
            <person name="Gong F."/>
            <person name="Gorrell J.H."/>
            <person name="Gu Z."/>
            <person name="Guan P."/>
            <person name="Harris M."/>
            <person name="Harris N.L."/>
            <person name="Harvey D.A."/>
            <person name="Heiman T.J."/>
            <person name="Hernandez J.R."/>
            <person name="Houck J."/>
            <person name="Hostin D."/>
            <person name="Houston K.A."/>
            <person name="Howland T.J."/>
            <person name="Wei M.-H."/>
            <person name="Ibegwam C."/>
            <person name="Jalali M."/>
            <person name="Kalush F."/>
            <person name="Karpen G.H."/>
            <person name="Ke Z."/>
            <person name="Kennison J.A."/>
            <person name="Ketchum K.A."/>
            <person name="Kimmel B.E."/>
            <person name="Kodira C.D."/>
            <person name="Kraft C.L."/>
            <person name="Kravitz S."/>
            <person name="Kulp D."/>
            <person name="Lai Z."/>
            <person name="Lasko P."/>
            <person name="Lei Y."/>
            <person name="Levitsky A.A."/>
            <person name="Li J.H."/>
            <person name="Li Z."/>
            <person name="Liang Y."/>
            <person name="Lin X."/>
            <person name="Liu X."/>
            <person name="Mattei B."/>
            <person name="McIntosh T.C."/>
            <person name="McLeod M.P."/>
            <person name="McPherson D."/>
            <person name="Merkulov G."/>
            <person name="Milshina N.V."/>
            <person name="Mobarry C."/>
            <person name="Morris J."/>
            <person name="Moshrefi A."/>
            <person name="Mount S.M."/>
            <person name="Moy M."/>
            <person name="Murphy B."/>
            <person name="Murphy L."/>
            <person name="Muzny D.M."/>
            <person name="Nelson D.L."/>
            <person name="Nelson D.R."/>
            <person name="Nelson K.A."/>
            <person name="Nixon K."/>
            <person name="Nusskern D.R."/>
            <person name="Pacleb J.M."/>
            <person name="Palazzolo M."/>
            <person name="Pittman G.S."/>
            <person name="Pan S."/>
            <person name="Pollard J."/>
            <person name="Puri V."/>
            <person name="Reese M.G."/>
            <person name="Reinert K."/>
            <person name="Remington K."/>
            <person name="Saunders R.D.C."/>
            <person name="Scheeler F."/>
            <person name="Shen H."/>
            <person name="Shue B.C."/>
            <person name="Siden-Kiamos I."/>
            <person name="Simpson M."/>
            <person name="Skupski M.P."/>
            <person name="Smith T.J."/>
            <person name="Spier E."/>
            <person name="Spradling A.C."/>
            <person name="Stapleton M."/>
            <person name="Strong R."/>
            <person name="Sun E."/>
            <person name="Svirskas R."/>
            <person name="Tector C."/>
            <person name="Turner R."/>
            <person name="Venter E."/>
            <person name="Wang A.H."/>
            <person name="Wang X."/>
            <person name="Wang Z.-Y."/>
            <person name="Wassarman D.A."/>
            <person name="Weinstock G.M."/>
            <person name="Weissenbach J."/>
            <person name="Williams S.M."/>
            <person name="Woodage T."/>
            <person name="Worley K.C."/>
            <person name="Wu D."/>
            <person name="Yang S."/>
            <person name="Yao Q.A."/>
            <person name="Ye J."/>
            <person name="Yeh R.-F."/>
            <person name="Zaveri J.S."/>
            <person name="Zhan M."/>
            <person name="Zhang G."/>
            <person name="Zhao Q."/>
            <person name="Zheng L."/>
            <person name="Zheng X.H."/>
            <person name="Zhong F.N."/>
            <person name="Zhong W."/>
            <person name="Zhou X."/>
            <person name="Zhu S.C."/>
            <person name="Zhu X."/>
            <person name="Smith H.O."/>
            <person name="Gibbs R.A."/>
            <person name="Myers E.W."/>
            <person name="Rubin G.M."/>
            <person name="Venter J.C."/>
        </authorList>
    </citation>
    <scope>NUCLEOTIDE SEQUENCE [LARGE SCALE GENOMIC DNA]</scope>
    <source>
        <strain>Berkeley</strain>
    </source>
</reference>
<reference key="2">
    <citation type="journal article" date="2002" name="Genome Biol.">
        <title>Annotation of the Drosophila melanogaster euchromatic genome: a systematic review.</title>
        <authorList>
            <person name="Misra S."/>
            <person name="Crosby M.A."/>
            <person name="Mungall C.J."/>
            <person name="Matthews B.B."/>
            <person name="Campbell K.S."/>
            <person name="Hradecky P."/>
            <person name="Huang Y."/>
            <person name="Kaminker J.S."/>
            <person name="Millburn G.H."/>
            <person name="Prochnik S.E."/>
            <person name="Smith C.D."/>
            <person name="Tupy J.L."/>
            <person name="Whitfield E.J."/>
            <person name="Bayraktaroglu L."/>
            <person name="Berman B.P."/>
            <person name="Bettencourt B.R."/>
            <person name="Celniker S.E."/>
            <person name="de Grey A.D.N.J."/>
            <person name="Drysdale R.A."/>
            <person name="Harris N.L."/>
            <person name="Richter J."/>
            <person name="Russo S."/>
            <person name="Schroeder A.J."/>
            <person name="Shu S.Q."/>
            <person name="Stapleton M."/>
            <person name="Yamada C."/>
            <person name="Ashburner M."/>
            <person name="Gelbart W.M."/>
            <person name="Rubin G.M."/>
            <person name="Lewis S.E."/>
        </authorList>
    </citation>
    <scope>GENOME REANNOTATION</scope>
    <scope>ALTERNATIVE SPLICING</scope>
    <source>
        <strain>Berkeley</strain>
    </source>
</reference>
<reference key="3">
    <citation type="journal article" date="2002" name="Genome Biol.">
        <title>A Drosophila full-length cDNA resource.</title>
        <authorList>
            <person name="Stapleton M."/>
            <person name="Carlson J.W."/>
            <person name="Brokstein P."/>
            <person name="Yu C."/>
            <person name="Champe M."/>
            <person name="George R.A."/>
            <person name="Guarin H."/>
            <person name="Kronmiller B."/>
            <person name="Pacleb J.M."/>
            <person name="Park S."/>
            <person name="Wan K.H."/>
            <person name="Rubin G.M."/>
            <person name="Celniker S.E."/>
        </authorList>
    </citation>
    <scope>NUCLEOTIDE SEQUENCE [LARGE SCALE MRNA] (ISOFORM B)</scope>
    <source>
        <strain>Berkeley</strain>
        <tissue>Testis</tissue>
    </source>
</reference>
<reference key="4">
    <citation type="submission" date="2003-08" db="EMBL/GenBank/DDBJ databases">
        <authorList>
            <person name="Stapleton M."/>
            <person name="Brokstein P."/>
            <person name="Hong L."/>
            <person name="Agbayani A."/>
            <person name="Carlson J.W."/>
            <person name="Champe M."/>
            <person name="Chavez C."/>
            <person name="Dorsett V."/>
            <person name="Dresnek D."/>
            <person name="Farfan D."/>
            <person name="Frise E."/>
            <person name="George R.A."/>
            <person name="Gonzalez M."/>
            <person name="Guarin H."/>
            <person name="Kronmiller B."/>
            <person name="Li P.W."/>
            <person name="Liao G."/>
            <person name="Miranda A."/>
            <person name="Mungall C.J."/>
            <person name="Nunoo J."/>
            <person name="Pacleb J.M."/>
            <person name="Paragas V."/>
            <person name="Park S."/>
            <person name="Patel S."/>
            <person name="Phouanenavong S."/>
            <person name="Wan K.H."/>
            <person name="Yu C."/>
            <person name="Lewis S.E."/>
            <person name="Rubin G.M."/>
            <person name="Celniker S.E."/>
        </authorList>
    </citation>
    <scope>NUCLEOTIDE SEQUENCE [LARGE SCALE MRNA] (ISOFORM A)</scope>
    <source>
        <strain>Berkeley</strain>
        <tissue>Testis</tissue>
    </source>
</reference>
<reference key="5">
    <citation type="journal article" date="2005" name="Nat. Genet.">
        <title>Pyrexia is a new thermal transient receptor potential channel endowing tolerance to high temperatures in Drosophila melanogaster.</title>
        <authorList>
            <person name="Lee Y."/>
            <person name="Lee Y."/>
            <person name="Lee J."/>
            <person name="Bang S."/>
            <person name="Hyun S."/>
            <person name="Kang J."/>
            <person name="Hong S.-T."/>
            <person name="Bae E."/>
            <person name="Kaang B.-K."/>
            <person name="Kim J."/>
        </authorList>
    </citation>
    <scope>FUNCTION</scope>
    <scope>TISSUE SPECIFICITY</scope>
    <scope>DEVELOPMENTAL STAGE</scope>
</reference>
<dbReference type="EMBL" id="AE014296">
    <property type="protein sequence ID" value="AAF47356.2"/>
    <property type="molecule type" value="Genomic_DNA"/>
</dbReference>
<dbReference type="EMBL" id="AE014296">
    <property type="protein sequence ID" value="AAN11430.1"/>
    <property type="molecule type" value="Genomic_DNA"/>
</dbReference>
<dbReference type="EMBL" id="BT001363">
    <property type="protein sequence ID" value="AAN71118.1"/>
    <property type="molecule type" value="mRNA"/>
</dbReference>
<dbReference type="EMBL" id="BT010317">
    <property type="protein sequence ID" value="AAQ23635.1"/>
    <property type="molecule type" value="mRNA"/>
</dbReference>
<dbReference type="RefSeq" id="NP_612015.1">
    <molecule id="Q9W0T5-1"/>
    <property type="nucleotide sequence ID" value="NM_138171.2"/>
</dbReference>
<dbReference type="RefSeq" id="NP_728501.1">
    <molecule id="Q9W0T5-2"/>
    <property type="nucleotide sequence ID" value="NM_167813.2"/>
</dbReference>
<dbReference type="SMR" id="Q9W0T5"/>
<dbReference type="BioGRID" id="63600">
    <property type="interactions" value="1"/>
</dbReference>
<dbReference type="FunCoup" id="Q9W0T5">
    <property type="interactions" value="1"/>
</dbReference>
<dbReference type="IntAct" id="Q9W0T5">
    <property type="interactions" value="3"/>
</dbReference>
<dbReference type="STRING" id="7227.FBpp0072423"/>
<dbReference type="TCDB" id="1.A.4.6.4">
    <property type="family name" value="the transient receptor potential ca2+/cation channel (trp-cc) family"/>
</dbReference>
<dbReference type="GlyCosmos" id="Q9W0T5">
    <property type="glycosylation" value="1 site, No reported glycans"/>
</dbReference>
<dbReference type="GlyGen" id="Q9W0T5">
    <property type="glycosylation" value="1 site"/>
</dbReference>
<dbReference type="PaxDb" id="7227-FBpp0072423"/>
<dbReference type="DNASU" id="38037"/>
<dbReference type="EnsemblMetazoa" id="FBtr0072524">
    <molecule id="Q9W0T5-1"/>
    <property type="protein sequence ID" value="FBpp0072423"/>
    <property type="gene ID" value="FBgn0035113"/>
</dbReference>
<dbReference type="EnsemblMetazoa" id="FBtr0072525">
    <molecule id="Q9W0T5-2"/>
    <property type="protein sequence ID" value="FBpp0072424"/>
    <property type="gene ID" value="FBgn0035113"/>
</dbReference>
<dbReference type="GeneID" id="38037"/>
<dbReference type="KEGG" id="dme:Dmel_CG17142"/>
<dbReference type="UCSC" id="CG17142-RA">
    <molecule id="Q9W0T5-1"/>
    <property type="organism name" value="d. melanogaster"/>
</dbReference>
<dbReference type="AGR" id="FB:FBgn0035113"/>
<dbReference type="CTD" id="38037"/>
<dbReference type="FlyBase" id="FBgn0035113">
    <property type="gene designation" value="pyx"/>
</dbReference>
<dbReference type="VEuPathDB" id="VectorBase:FBgn0035113"/>
<dbReference type="eggNOG" id="KOG0510">
    <property type="taxonomic scope" value="Eukaryota"/>
</dbReference>
<dbReference type="GeneTree" id="ENSGT00940000156118"/>
<dbReference type="HOGENOM" id="CLU_009006_0_0_1"/>
<dbReference type="InParanoid" id="Q9W0T5"/>
<dbReference type="OMA" id="CNLALIC"/>
<dbReference type="OrthoDB" id="7464126at2759"/>
<dbReference type="PhylomeDB" id="Q9W0T5"/>
<dbReference type="SignaLink" id="Q9W0T5"/>
<dbReference type="BioGRID-ORCS" id="38037">
    <property type="hits" value="0 hits in 1 CRISPR screen"/>
</dbReference>
<dbReference type="GenomeRNAi" id="38037"/>
<dbReference type="PRO" id="PR:Q9W0T5"/>
<dbReference type="Proteomes" id="UP000000803">
    <property type="component" value="Chromosome 3L"/>
</dbReference>
<dbReference type="Bgee" id="FBgn0035113">
    <property type="expression patterns" value="Expressed in fat body cell in open tracheal system trachea and 48 other cell types or tissues"/>
</dbReference>
<dbReference type="GO" id="GO:0034703">
    <property type="term" value="C:cation channel complex"/>
    <property type="evidence" value="ECO:0000314"/>
    <property type="project" value="UniProtKB"/>
</dbReference>
<dbReference type="GO" id="GO:0016020">
    <property type="term" value="C:membrane"/>
    <property type="evidence" value="ECO:0000305"/>
    <property type="project" value="UniProtKB"/>
</dbReference>
<dbReference type="GO" id="GO:0005262">
    <property type="term" value="F:calcium channel activity"/>
    <property type="evidence" value="ECO:0000250"/>
    <property type="project" value="FlyBase"/>
</dbReference>
<dbReference type="GO" id="GO:0005261">
    <property type="term" value="F:monoatomic cation channel activity"/>
    <property type="evidence" value="ECO:0000314"/>
    <property type="project" value="UniProtKB"/>
</dbReference>
<dbReference type="GO" id="GO:0006816">
    <property type="term" value="P:calcium ion transport"/>
    <property type="evidence" value="ECO:0000314"/>
    <property type="project" value="FlyBase"/>
</dbReference>
<dbReference type="GO" id="GO:0006812">
    <property type="term" value="P:monoatomic cation transport"/>
    <property type="evidence" value="ECO:0000314"/>
    <property type="project" value="UniProtKB"/>
</dbReference>
<dbReference type="GO" id="GO:0048060">
    <property type="term" value="P:negative gravitaxis"/>
    <property type="evidence" value="ECO:0000315"/>
    <property type="project" value="FlyBase"/>
</dbReference>
<dbReference type="GO" id="GO:0006813">
    <property type="term" value="P:potassium ion transport"/>
    <property type="evidence" value="ECO:0000314"/>
    <property type="project" value="FlyBase"/>
</dbReference>
<dbReference type="GO" id="GO:0009408">
    <property type="term" value="P:response to heat"/>
    <property type="evidence" value="ECO:0000315"/>
    <property type="project" value="UniProtKB"/>
</dbReference>
<dbReference type="Gene3D" id="1.25.40.20">
    <property type="entry name" value="Ankyrin repeat-containing domain"/>
    <property type="match status" value="1"/>
</dbReference>
<dbReference type="InterPro" id="IPR002110">
    <property type="entry name" value="Ankyrin_rpt"/>
</dbReference>
<dbReference type="InterPro" id="IPR036770">
    <property type="entry name" value="Ankyrin_rpt-contain_sf"/>
</dbReference>
<dbReference type="InterPro" id="IPR005821">
    <property type="entry name" value="Ion_trans_dom"/>
</dbReference>
<dbReference type="InterPro" id="IPR052076">
    <property type="entry name" value="TRP_cation_channel"/>
</dbReference>
<dbReference type="PANTHER" id="PTHR47143:SF1">
    <property type="entry name" value="ION_TRANS DOMAIN-CONTAINING PROTEIN"/>
    <property type="match status" value="1"/>
</dbReference>
<dbReference type="PANTHER" id="PTHR47143">
    <property type="entry name" value="TRANSIENT RECEPTOR POTENTIAL CATION CHANNEL PROTEIN PAINLESS"/>
    <property type="match status" value="1"/>
</dbReference>
<dbReference type="Pfam" id="PF12796">
    <property type="entry name" value="Ank_2"/>
    <property type="match status" value="3"/>
</dbReference>
<dbReference type="Pfam" id="PF13637">
    <property type="entry name" value="Ank_4"/>
    <property type="match status" value="1"/>
</dbReference>
<dbReference type="Pfam" id="PF00520">
    <property type="entry name" value="Ion_trans"/>
    <property type="match status" value="1"/>
</dbReference>
<dbReference type="PRINTS" id="PR01415">
    <property type="entry name" value="ANKYRIN"/>
</dbReference>
<dbReference type="SMART" id="SM00248">
    <property type="entry name" value="ANK"/>
    <property type="match status" value="9"/>
</dbReference>
<dbReference type="SUPFAM" id="SSF48403">
    <property type="entry name" value="Ankyrin repeat"/>
    <property type="match status" value="1"/>
</dbReference>
<dbReference type="PROSITE" id="PS50297">
    <property type="entry name" value="ANK_REP_REGION"/>
    <property type="match status" value="1"/>
</dbReference>
<dbReference type="PROSITE" id="PS50088">
    <property type="entry name" value="ANK_REPEAT"/>
    <property type="match status" value="7"/>
</dbReference>
<organism>
    <name type="scientific">Drosophila melanogaster</name>
    <name type="common">Fruit fly</name>
    <dbReference type="NCBI Taxonomy" id="7227"/>
    <lineage>
        <taxon>Eukaryota</taxon>
        <taxon>Metazoa</taxon>
        <taxon>Ecdysozoa</taxon>
        <taxon>Arthropoda</taxon>
        <taxon>Hexapoda</taxon>
        <taxon>Insecta</taxon>
        <taxon>Pterygota</taxon>
        <taxon>Neoptera</taxon>
        <taxon>Endopterygota</taxon>
        <taxon>Diptera</taxon>
        <taxon>Brachycera</taxon>
        <taxon>Muscomorpha</taxon>
        <taxon>Ephydroidea</taxon>
        <taxon>Drosophilidae</taxon>
        <taxon>Drosophila</taxon>
        <taxon>Sophophora</taxon>
    </lineage>
</organism>
<gene>
    <name type="primary">pyx</name>
    <name type="ORF">CG17142</name>
</gene>
<protein>
    <recommendedName>
        <fullName>Transient receptor potential channel pyrexia</fullName>
    </recommendedName>
</protein>
<comment type="function">
    <text evidence="2">Receptor-activated non-selective cation channel involved in protection or tolerance from high temperature stress. Activated by temperatures above 40 degrees Celsius. More permeable to K(+) than to Na(+). May act in stress protection allow flies to survive in natural environments.</text>
</comment>
<comment type="subunit">
    <text evidence="4">Homooligomer; between isoform A and isoform B.</text>
</comment>
<comment type="subcellular location">
    <subcellularLocation>
        <location evidence="4">Membrane</location>
        <topology evidence="4">Multi-pass membrane protein</topology>
    </subcellularLocation>
</comment>
<comment type="alternative products">
    <event type="alternative splicing"/>
    <isoform>
        <id>Q9W0T5-1</id>
        <name>A</name>
        <sequence type="displayed"/>
    </isoform>
    <isoform>
        <id>Q9W0T5-2</id>
        <name>B</name>
        <sequence type="described" ref="VSP_013426"/>
    </isoform>
</comment>
<comment type="tissue specificity">
    <text evidence="2">Expressed in various peripheral nerves and the central nerves in embryos. In adults, it is expressed in sensory neurons lying beneath the bristles around eyes, neurons innervating the bristles on the back of thorax and neurons in maxillary palps, proboscis and antennae. Expressed in multidendritic neurons, which mediate temperature sensing, as well as non-multidendritic neurons in larval epidermis. Localizes ubiquitously throughout neurites.</text>
</comment>
<comment type="similarity">
    <text evidence="4">Belongs to the transient receptor (TC 1.A.4) family. STrpC subfamily.</text>
</comment>